<name>YD12A_YEAST</name>
<dbReference type="EMBL" id="Z68194">
    <property type="protein sequence ID" value="CAA92353.1"/>
    <property type="molecule type" value="Genomic_DNA"/>
</dbReference>
<dbReference type="EMBL" id="Z68195">
    <property type="protein sequence ID" value="CAA92361.1"/>
    <property type="molecule type" value="Genomic_DNA"/>
</dbReference>
<dbReference type="EMBL" id="BK006938">
    <property type="protein sequence ID" value="DAA12054.1"/>
    <property type="molecule type" value="Genomic_DNA"/>
</dbReference>
<dbReference type="PIR" id="S61577">
    <property type="entry name" value="S61577"/>
</dbReference>
<dbReference type="RefSeq" id="NP_620388.3">
    <molecule id="Q12441-1"/>
    <property type="nucleotide sequence ID" value="NM_001184435.3"/>
</dbReference>
<dbReference type="SMR" id="Q12441"/>
<dbReference type="BioGRID" id="32263">
    <property type="interactions" value="2"/>
</dbReference>
<dbReference type="FunCoup" id="Q12441">
    <property type="interactions" value="50"/>
</dbReference>
<dbReference type="GlyGen" id="Q12441">
    <property type="glycosylation" value="2 sites"/>
</dbReference>
<dbReference type="iPTMnet" id="Q12441"/>
<dbReference type="PaxDb" id="4932-YDR210C-C"/>
<dbReference type="PeptideAtlas" id="Q12441"/>
<dbReference type="GeneID" id="851795"/>
<dbReference type="KEGG" id="sce:YDR210C-C"/>
<dbReference type="AGR" id="SGD:S000007409"/>
<dbReference type="SGD" id="S000007409">
    <property type="gene designation" value="YDR210C-C"/>
</dbReference>
<dbReference type="VEuPathDB" id="FungiDB:YDR210C-C"/>
<dbReference type="eggNOG" id="KOG0017">
    <property type="taxonomic scope" value="Eukaryota"/>
</dbReference>
<dbReference type="HOGENOM" id="CLU_045291_1_0_1"/>
<dbReference type="InParanoid" id="Q12441"/>
<dbReference type="OrthoDB" id="4046078at2759"/>
<dbReference type="BioGRID-ORCS" id="851795">
    <property type="hits" value="0 hits in 10 CRISPR screens"/>
</dbReference>
<dbReference type="Proteomes" id="UP000002311">
    <property type="component" value="Chromosome IV"/>
</dbReference>
<dbReference type="RNAct" id="Q12441">
    <property type="molecule type" value="protein"/>
</dbReference>
<dbReference type="GO" id="GO:0005737">
    <property type="term" value="C:cytoplasm"/>
    <property type="evidence" value="ECO:0007669"/>
    <property type="project" value="UniProtKB-SubCell"/>
</dbReference>
<dbReference type="GO" id="GO:0003723">
    <property type="term" value="F:RNA binding"/>
    <property type="evidence" value="ECO:0007669"/>
    <property type="project" value="UniProtKB-KW"/>
</dbReference>
<dbReference type="GO" id="GO:0075523">
    <property type="term" value="P:viral translational frameshifting"/>
    <property type="evidence" value="ECO:0007669"/>
    <property type="project" value="UniProtKB-KW"/>
</dbReference>
<dbReference type="InterPro" id="IPR015820">
    <property type="entry name" value="TYA"/>
</dbReference>
<dbReference type="Pfam" id="PF01021">
    <property type="entry name" value="TYA"/>
    <property type="match status" value="1"/>
</dbReference>
<proteinExistence type="evidence at protein level"/>
<organism>
    <name type="scientific">Saccharomyces cerevisiae (strain ATCC 204508 / S288c)</name>
    <name type="common">Baker's yeast</name>
    <dbReference type="NCBI Taxonomy" id="559292"/>
    <lineage>
        <taxon>Eukaryota</taxon>
        <taxon>Fungi</taxon>
        <taxon>Dikarya</taxon>
        <taxon>Ascomycota</taxon>
        <taxon>Saccharomycotina</taxon>
        <taxon>Saccharomycetes</taxon>
        <taxon>Saccharomycetales</taxon>
        <taxon>Saccharomycetaceae</taxon>
        <taxon>Saccharomyces</taxon>
    </lineage>
</organism>
<accession>Q12441</accession>
<accession>D6VSJ4</accession>
<reference key="1">
    <citation type="journal article" date="1997" name="Nature">
        <title>The nucleotide sequence of Saccharomyces cerevisiae chromosome IV.</title>
        <authorList>
            <person name="Jacq C."/>
            <person name="Alt-Moerbe J."/>
            <person name="Andre B."/>
            <person name="Arnold W."/>
            <person name="Bahr A."/>
            <person name="Ballesta J.P.G."/>
            <person name="Bargues M."/>
            <person name="Baron L."/>
            <person name="Becker A."/>
            <person name="Biteau N."/>
            <person name="Bloecker H."/>
            <person name="Blugeon C."/>
            <person name="Boskovic J."/>
            <person name="Brandt P."/>
            <person name="Brueckner M."/>
            <person name="Buitrago M.J."/>
            <person name="Coster F."/>
            <person name="Delaveau T."/>
            <person name="del Rey F."/>
            <person name="Dujon B."/>
            <person name="Eide L.G."/>
            <person name="Garcia-Cantalejo J.M."/>
            <person name="Goffeau A."/>
            <person name="Gomez-Peris A."/>
            <person name="Granotier C."/>
            <person name="Hanemann V."/>
            <person name="Hankeln T."/>
            <person name="Hoheisel J.D."/>
            <person name="Jaeger W."/>
            <person name="Jimenez A."/>
            <person name="Jonniaux J.-L."/>
            <person name="Kraemer C."/>
            <person name="Kuester H."/>
            <person name="Laamanen P."/>
            <person name="Legros Y."/>
            <person name="Louis E.J."/>
            <person name="Moeller-Rieker S."/>
            <person name="Monnet A."/>
            <person name="Moro M."/>
            <person name="Mueller-Auer S."/>
            <person name="Nussbaumer B."/>
            <person name="Paricio N."/>
            <person name="Paulin L."/>
            <person name="Perea J."/>
            <person name="Perez-Alonso M."/>
            <person name="Perez-Ortin J.E."/>
            <person name="Pohl T.M."/>
            <person name="Prydz H."/>
            <person name="Purnelle B."/>
            <person name="Rasmussen S.W."/>
            <person name="Remacha M.A."/>
            <person name="Revuelta J.L."/>
            <person name="Rieger M."/>
            <person name="Salom D."/>
            <person name="Saluz H.P."/>
            <person name="Saiz J.E."/>
            <person name="Saren A.-M."/>
            <person name="Schaefer M."/>
            <person name="Scharfe M."/>
            <person name="Schmidt E.R."/>
            <person name="Schneider C."/>
            <person name="Scholler P."/>
            <person name="Schwarz S."/>
            <person name="Soler-Mira A."/>
            <person name="Urrestarazu L.A."/>
            <person name="Verhasselt P."/>
            <person name="Vissers S."/>
            <person name="Voet M."/>
            <person name="Volckaert G."/>
            <person name="Wagner G."/>
            <person name="Wambutt R."/>
            <person name="Wedler E."/>
            <person name="Wedler H."/>
            <person name="Woelfl S."/>
            <person name="Harris D.E."/>
            <person name="Bowman S."/>
            <person name="Brown D."/>
            <person name="Churcher C.M."/>
            <person name="Connor R."/>
            <person name="Dedman K."/>
            <person name="Gentles S."/>
            <person name="Hamlin N."/>
            <person name="Hunt S."/>
            <person name="Jones L."/>
            <person name="McDonald S."/>
            <person name="Murphy L.D."/>
            <person name="Niblett D."/>
            <person name="Odell C."/>
            <person name="Oliver K."/>
            <person name="Rajandream M.A."/>
            <person name="Richards C."/>
            <person name="Shore L."/>
            <person name="Walsh S.V."/>
            <person name="Barrell B.G."/>
            <person name="Dietrich F.S."/>
            <person name="Mulligan J.T."/>
            <person name="Allen E."/>
            <person name="Araujo R."/>
            <person name="Aviles E."/>
            <person name="Berno A."/>
            <person name="Carpenter J."/>
            <person name="Chen E."/>
            <person name="Cherry J.M."/>
            <person name="Chung E."/>
            <person name="Duncan M."/>
            <person name="Hunicke-Smith S."/>
            <person name="Hyman R.W."/>
            <person name="Komp C."/>
            <person name="Lashkari D."/>
            <person name="Lew H."/>
            <person name="Lin D."/>
            <person name="Mosedale D."/>
            <person name="Nakahara K."/>
            <person name="Namath A."/>
            <person name="Oefner P."/>
            <person name="Oh C."/>
            <person name="Petel F.X."/>
            <person name="Roberts D."/>
            <person name="Schramm S."/>
            <person name="Schroeder M."/>
            <person name="Shogren T."/>
            <person name="Shroff N."/>
            <person name="Winant A."/>
            <person name="Yelton M.A."/>
            <person name="Botstein D."/>
            <person name="Davis R.W."/>
            <person name="Johnston M."/>
            <person name="Andrews S."/>
            <person name="Brinkman R."/>
            <person name="Cooper J."/>
            <person name="Ding H."/>
            <person name="Du Z."/>
            <person name="Favello A."/>
            <person name="Fulton L."/>
            <person name="Gattung S."/>
            <person name="Greco T."/>
            <person name="Hallsworth K."/>
            <person name="Hawkins J."/>
            <person name="Hillier L.W."/>
            <person name="Jier M."/>
            <person name="Johnson D."/>
            <person name="Johnston L."/>
            <person name="Kirsten J."/>
            <person name="Kucaba T."/>
            <person name="Langston Y."/>
            <person name="Latreille P."/>
            <person name="Le T."/>
            <person name="Mardis E."/>
            <person name="Menezes S."/>
            <person name="Miller N."/>
            <person name="Nhan M."/>
            <person name="Pauley A."/>
            <person name="Peluso D."/>
            <person name="Rifkin L."/>
            <person name="Riles L."/>
            <person name="Taich A."/>
            <person name="Trevaskis E."/>
            <person name="Vignati D."/>
            <person name="Wilcox L."/>
            <person name="Wohldman P."/>
            <person name="Vaudin M."/>
            <person name="Wilson R."/>
            <person name="Waterston R."/>
            <person name="Albermann K."/>
            <person name="Hani J."/>
            <person name="Heumann K."/>
            <person name="Kleine K."/>
            <person name="Mewes H.-W."/>
            <person name="Zollner A."/>
            <person name="Zaccaria P."/>
        </authorList>
    </citation>
    <scope>NUCLEOTIDE SEQUENCE [LARGE SCALE GENOMIC DNA]</scope>
    <source>
        <strain>ATCC 204508 / S288c</strain>
    </source>
</reference>
<reference key="2">
    <citation type="journal article" date="2014" name="G3 (Bethesda)">
        <title>The reference genome sequence of Saccharomyces cerevisiae: Then and now.</title>
        <authorList>
            <person name="Engel S.R."/>
            <person name="Dietrich F.S."/>
            <person name="Fisk D.G."/>
            <person name="Binkley G."/>
            <person name="Balakrishnan R."/>
            <person name="Costanzo M.C."/>
            <person name="Dwight S.S."/>
            <person name="Hitz B.C."/>
            <person name="Karra K."/>
            <person name="Nash R.S."/>
            <person name="Weng S."/>
            <person name="Wong E.D."/>
            <person name="Lloyd P."/>
            <person name="Skrzypek M.S."/>
            <person name="Miyasato S.R."/>
            <person name="Simison M."/>
            <person name="Cherry J.M."/>
        </authorList>
    </citation>
    <scope>GENOME REANNOTATION</scope>
    <source>
        <strain>ATCC 204508 / S288c</strain>
    </source>
</reference>
<reference key="3">
    <citation type="journal article" date="1998" name="Genome Res.">
        <title>Transposable elements and genome organization: a comprehensive survey of retrotransposons revealed by the complete Saccharomyces cerevisiae genome sequence.</title>
        <authorList>
            <person name="Kim J.M."/>
            <person name="Vanguri S."/>
            <person name="Boeke J.D."/>
            <person name="Gabriel A."/>
            <person name="Voytas D.F."/>
        </authorList>
    </citation>
    <scope>NOMENCLATURE</scope>
</reference>
<reference key="4">
    <citation type="journal article" date="2002" name="Mol. Cell. Biol.">
        <title>Differential effects of chromatin and Gcn4 on the 50-fold range of expression among individual yeast Ty1 retrotransposons.</title>
        <authorList>
            <person name="Morillon A."/>
            <person name="Benard L."/>
            <person name="Springer M."/>
            <person name="Lesage P."/>
        </authorList>
    </citation>
    <scope>INDUCTION</scope>
</reference>
<reference key="5">
    <citation type="journal article" date="2005" name="Cytogenet. Genome Res.">
        <title>Happy together: the life and times of Ty retrotransposons and their hosts.</title>
        <authorList>
            <person name="Lesage P."/>
            <person name="Todeschini A.L."/>
        </authorList>
    </citation>
    <scope>REVIEW</scope>
</reference>
<reference key="6">
    <citation type="journal article" date="2008" name="Mol. Cell. Proteomics">
        <title>A multidimensional chromatography technology for in-depth phosphoproteome analysis.</title>
        <authorList>
            <person name="Albuquerque C.P."/>
            <person name="Smolka M.B."/>
            <person name="Payne S.H."/>
            <person name="Bafna V."/>
            <person name="Eng J."/>
            <person name="Zhou H."/>
        </authorList>
    </citation>
    <scope>PHOSPHORYLATION [LARGE SCALE ANALYSIS] AT SER-416</scope>
    <scope>IDENTIFICATION BY MASS SPECTROMETRY [LARGE SCALE ANALYSIS]</scope>
</reference>
<reference key="7">
    <citation type="journal article" date="2009" name="Science">
        <title>Global analysis of Cdk1 substrate phosphorylation sites provides insights into evolution.</title>
        <authorList>
            <person name="Holt L.J."/>
            <person name="Tuch B.B."/>
            <person name="Villen J."/>
            <person name="Johnson A.D."/>
            <person name="Gygi S.P."/>
            <person name="Morgan D.O."/>
        </authorList>
    </citation>
    <scope>IDENTIFICATION BY MASS SPECTROMETRY [LARGE SCALE ANALYSIS]</scope>
</reference>
<keyword id="KW-0963">Cytoplasm</keyword>
<keyword id="KW-0597">Phosphoprotein</keyword>
<keyword id="KW-1185">Reference proteome</keyword>
<keyword id="KW-0688">Ribosomal frameshifting</keyword>
<keyword id="KW-0694">RNA-binding</keyword>
<keyword id="KW-0814">Transposable element</keyword>
<protein>
    <recommendedName>
        <fullName>Transposon Ty1-DR3 Gag polyprotein</fullName>
    </recommendedName>
    <alternativeName>
        <fullName>Gag-p49</fullName>
    </alternativeName>
    <alternativeName>
        <fullName>Transposon Ty1 protein A</fullName>
        <shortName>TY1A</shortName>
        <shortName>TYA</shortName>
    </alternativeName>
    <alternativeName>
        <fullName>p58</fullName>
    </alternativeName>
    <component>
        <recommendedName>
            <fullName>Capsid protein</fullName>
            <shortName>CA</shortName>
        </recommendedName>
        <alternativeName>
            <fullName>Gag-p45</fullName>
        </alternativeName>
        <alternativeName>
            <fullName>p54</fullName>
        </alternativeName>
    </component>
    <component>
        <recommendedName>
            <fullName>Gag-p4</fullName>
        </recommendedName>
    </component>
</protein>
<evidence type="ECO:0000250" key="1"/>
<evidence type="ECO:0000256" key="2">
    <source>
        <dbReference type="SAM" id="MobiDB-lite"/>
    </source>
</evidence>
<evidence type="ECO:0000269" key="3">
    <source>
    </source>
</evidence>
<evidence type="ECO:0007744" key="4">
    <source>
    </source>
</evidence>
<feature type="chain" id="PRO_0000279014" description="Transposon Ty1-DR3 Gag polyprotein">
    <location>
        <begin position="1"/>
        <end position="440"/>
    </location>
</feature>
<feature type="chain" id="PRO_0000279015" description="Capsid protein" evidence="1">
    <location>
        <begin position="1"/>
        <end position="401"/>
    </location>
</feature>
<feature type="peptide" id="PRO_0000279016" description="Gag-p4" evidence="1">
    <location>
        <begin position="402"/>
        <end position="440"/>
    </location>
</feature>
<feature type="region of interest" description="Disordered" evidence="2">
    <location>
        <begin position="1"/>
        <end position="93"/>
    </location>
</feature>
<feature type="region of interest" description="Disordered" evidence="2">
    <location>
        <begin position="126"/>
        <end position="173"/>
    </location>
</feature>
<feature type="region of interest" description="RNA-binding" evidence="1">
    <location>
        <begin position="299"/>
        <end position="401"/>
    </location>
</feature>
<feature type="region of interest" description="Disordered" evidence="2">
    <location>
        <begin position="352"/>
        <end position="440"/>
    </location>
</feature>
<feature type="compositionally biased region" description="Polar residues" evidence="2">
    <location>
        <begin position="1"/>
        <end position="10"/>
    </location>
</feature>
<feature type="compositionally biased region" description="Polar residues" evidence="2">
    <location>
        <begin position="48"/>
        <end position="60"/>
    </location>
</feature>
<feature type="compositionally biased region" description="Polar residues" evidence="2">
    <location>
        <begin position="127"/>
        <end position="152"/>
    </location>
</feature>
<feature type="compositionally biased region" description="Low complexity" evidence="2">
    <location>
        <begin position="153"/>
        <end position="165"/>
    </location>
</feature>
<feature type="compositionally biased region" description="Polar residues" evidence="2">
    <location>
        <begin position="402"/>
        <end position="428"/>
    </location>
</feature>
<feature type="compositionally biased region" description="Basic and acidic residues" evidence="2">
    <location>
        <begin position="429"/>
        <end position="440"/>
    </location>
</feature>
<feature type="site" description="Cleavage; by Ty1 protease" evidence="1">
    <location>
        <begin position="401"/>
        <end position="402"/>
    </location>
</feature>
<feature type="modified residue" description="Phosphoserine" evidence="4">
    <location>
        <position position="416"/>
    </location>
</feature>
<gene>
    <name type="primary">TY1A-DR3</name>
    <name type="synonym">YDRCTy1-2 GAG</name>
    <name type="ordered locus">YDR210C-C</name>
    <name type="ORF">YD8142B.02c</name>
</gene>
<comment type="function">
    <text evidence="1">Capsid protein (CA) is the structural component of the virus-like particle (VLP), forming the shell that encapsulates the retrotransposons dimeric RNA genome. The particles are assembled from trimer-clustered units and there are holes in the capsid shells that allow for the diffusion of macromolecules. CA also has nucleocapsid-like chaperone activity, promoting primer tRNA(i)-Met annealing to the multipartite primer-binding site (PBS), dimerization of Ty1 RNA and initiation of reverse transcription (By similarity).</text>
</comment>
<comment type="subunit">
    <text evidence="1">Homotrimer.</text>
</comment>
<comment type="subcellular location">
    <subcellularLocation>
        <location evidence="1">Cytoplasm</location>
    </subcellularLocation>
</comment>
<comment type="alternative products">
    <event type="ribosomal frameshifting"/>
    <isoform>
        <id>Q12441-1</id>
        <name>Transposon Ty1-DR3 Gag polyprotein</name>
        <sequence type="displayed"/>
    </isoform>
    <isoform>
        <id>Q99231-1</id>
        <name>Transposon Ty1-DR3 Gag-Pol polyprotein</name>
        <sequence type="external"/>
    </isoform>
    <text evidence="1">The Gag-Pol polyprotein is generated by a +1 ribosomal frameshift. The ratio of Gag:Gag-Pol varies between 20:1 and 5:1 (By similarity).</text>
</comment>
<comment type="induction">
    <text evidence="3">Ty1-DR3 is a weakly expressed element. Induced under amino acid starvation conditions by GCN4.</text>
</comment>
<comment type="domain">
    <text evidence="1">The C-terminal RNA-binding region of CA is sufficient for all its nucleocapsid-like chaperone activities.</text>
</comment>
<comment type="miscellaneous">
    <text>Retrotransposons are mobile genetic entities that are able to replicate via an RNA intermediate and a reverse transcription step. In contrast to retroviruses, retrotransposons are non-infectious, lack an envelope and remain intracellular. Ty1 retrotransposons belong to the copia elements (pseudoviridae).</text>
</comment>
<comment type="miscellaneous">
    <molecule>Isoform Transposon Ty1-DR3 Gag polyprotein</molecule>
    <text>Produced by conventional translation.</text>
</comment>
<sequence>MESQQLSNYPHISHGSACASVTSKEVHTNQDPLDVSASKIQEYDKASTKANSQQTTTPASSAVPENPHHASPQPASVPPPQNGPYPQQCMMTQNQANPSGWSFYGHPSMIPYTPYQMSPMYFPPGPQSQFPQYPSSVGTPLSTPSPESGNTFTDSSSADSDMTSTKKYVRPPPMLTSPNDFPNWVKTYIKFLQNSNLGGIIPTVNGKPVRQITDDELTFLYNTFQIFAPSQFLPTWVKDILSVDYTDIMKILSKSIEKMQSDTQEANDIVTLANLQYNGSTPADAFETKVTNIIDRLNNNGIHINNKVACQLIMRGLSGEYKFLRYTRHRHLNMTVAELFLDIHAIYEEQQGSRNSKPNYRRNRSDEKNDSRSYTNTTKPKVIARNPQKTNNSKSKTARAHNVSTSINSPSTDNDSISKSTTEPIQLNNKHDLHLRPETY</sequence>